<feature type="chain" id="PRO_1000045418" description="High frequency lysogenization protein HflD homolog">
    <location>
        <begin position="1"/>
        <end position="209"/>
    </location>
</feature>
<feature type="coiled-coil region" evidence="1">
    <location>
        <begin position="95"/>
        <end position="132"/>
    </location>
</feature>
<protein>
    <recommendedName>
        <fullName evidence="1">High frequency lysogenization protein HflD homolog</fullName>
    </recommendedName>
</protein>
<keyword id="KW-0997">Cell inner membrane</keyword>
<keyword id="KW-1003">Cell membrane</keyword>
<keyword id="KW-0175">Coiled coil</keyword>
<keyword id="KW-0963">Cytoplasm</keyword>
<keyword id="KW-0472">Membrane</keyword>
<keyword id="KW-1185">Reference proteome</keyword>
<organism>
    <name type="scientific">Cronobacter sakazakii (strain ATCC BAA-894)</name>
    <name type="common">Enterobacter sakazakii</name>
    <dbReference type="NCBI Taxonomy" id="290339"/>
    <lineage>
        <taxon>Bacteria</taxon>
        <taxon>Pseudomonadati</taxon>
        <taxon>Pseudomonadota</taxon>
        <taxon>Gammaproteobacteria</taxon>
        <taxon>Enterobacterales</taxon>
        <taxon>Enterobacteriaceae</taxon>
        <taxon>Cronobacter</taxon>
    </lineage>
</organism>
<comment type="subcellular location">
    <subcellularLocation>
        <location>Cytoplasm</location>
    </subcellularLocation>
    <subcellularLocation>
        <location evidence="1">Cell inner membrane</location>
        <topology evidence="1">Peripheral membrane protein</topology>
        <orientation evidence="1">Cytoplasmic side</orientation>
    </subcellularLocation>
</comment>
<comment type="similarity">
    <text evidence="1">Belongs to the HflD family.</text>
</comment>
<evidence type="ECO:0000255" key="1">
    <source>
        <dbReference type="HAMAP-Rule" id="MF_00695"/>
    </source>
</evidence>
<sequence>MAKNFYDITLALAGICQSARLVQSLAHEGTCDSEALHVSLKSVIDQNPASTLDVFGGREAGLKIGLETLLGMLNTSSRQGLGAELTRYTLSLMVLERKLAASKGAMNTLGNRIADLSRQLEHFELESDTLMSAMAGIYVDVISPLGPRIQVNGSPNVLQSPQIQAKVRATLLAGIRAAVLWQQVGGGRLQLMFSRNRLTTQAKQILAQC</sequence>
<proteinExistence type="inferred from homology"/>
<reference key="1">
    <citation type="journal article" date="2010" name="PLoS ONE">
        <title>Genome sequence of Cronobacter sakazakii BAA-894 and comparative genomic hybridization analysis with other Cronobacter species.</title>
        <authorList>
            <person name="Kucerova E."/>
            <person name="Clifton S.W."/>
            <person name="Xia X.Q."/>
            <person name="Long F."/>
            <person name="Porwollik S."/>
            <person name="Fulton L."/>
            <person name="Fronick C."/>
            <person name="Minx P."/>
            <person name="Kyung K."/>
            <person name="Warren W."/>
            <person name="Fulton R."/>
            <person name="Feng D."/>
            <person name="Wollam A."/>
            <person name="Shah N."/>
            <person name="Bhonagiri V."/>
            <person name="Nash W.E."/>
            <person name="Hallsworth-Pepin K."/>
            <person name="Wilson R.K."/>
            <person name="McClelland M."/>
            <person name="Forsythe S.J."/>
        </authorList>
    </citation>
    <scope>NUCLEOTIDE SEQUENCE [LARGE SCALE GENOMIC DNA]</scope>
    <source>
        <strain>ATCC BAA-894</strain>
    </source>
</reference>
<gene>
    <name evidence="1" type="primary">hflD</name>
    <name type="ordered locus">ESA_02214</name>
</gene>
<name>HFLD_CROS8</name>
<accession>A7MFV3</accession>
<dbReference type="EMBL" id="CP000783">
    <property type="protein sequence ID" value="ABU77463.1"/>
    <property type="molecule type" value="Genomic_DNA"/>
</dbReference>
<dbReference type="RefSeq" id="WP_012125056.1">
    <property type="nucleotide sequence ID" value="NC_009778.1"/>
</dbReference>
<dbReference type="SMR" id="A7MFV3"/>
<dbReference type="KEGG" id="esa:ESA_02214"/>
<dbReference type="PATRIC" id="fig|290339.8.peg.1976"/>
<dbReference type="HOGENOM" id="CLU_098920_0_0_6"/>
<dbReference type="Proteomes" id="UP000000260">
    <property type="component" value="Chromosome"/>
</dbReference>
<dbReference type="GO" id="GO:0005737">
    <property type="term" value="C:cytoplasm"/>
    <property type="evidence" value="ECO:0007669"/>
    <property type="project" value="UniProtKB-SubCell"/>
</dbReference>
<dbReference type="GO" id="GO:0005886">
    <property type="term" value="C:plasma membrane"/>
    <property type="evidence" value="ECO:0007669"/>
    <property type="project" value="UniProtKB-SubCell"/>
</dbReference>
<dbReference type="FunFam" id="1.10.3890.10:FF:000001">
    <property type="entry name" value="High frequency lysogenization protein HflD homolog"/>
    <property type="match status" value="1"/>
</dbReference>
<dbReference type="Gene3D" id="1.10.3890.10">
    <property type="entry name" value="HflD-like"/>
    <property type="match status" value="1"/>
</dbReference>
<dbReference type="HAMAP" id="MF_00695">
    <property type="entry name" value="HflD_protein"/>
    <property type="match status" value="1"/>
</dbReference>
<dbReference type="InterPro" id="IPR007451">
    <property type="entry name" value="HflD"/>
</dbReference>
<dbReference type="InterPro" id="IPR035932">
    <property type="entry name" value="HflD-like_sf"/>
</dbReference>
<dbReference type="NCBIfam" id="NF001245">
    <property type="entry name" value="PRK00218.1-1"/>
    <property type="match status" value="1"/>
</dbReference>
<dbReference type="NCBIfam" id="NF001246">
    <property type="entry name" value="PRK00218.1-2"/>
    <property type="match status" value="1"/>
</dbReference>
<dbReference type="NCBIfam" id="NF001248">
    <property type="entry name" value="PRK00218.1-4"/>
    <property type="match status" value="1"/>
</dbReference>
<dbReference type="NCBIfam" id="NF001249">
    <property type="entry name" value="PRK00218.1-5"/>
    <property type="match status" value="1"/>
</dbReference>
<dbReference type="PANTHER" id="PTHR38100">
    <property type="entry name" value="HIGH FREQUENCY LYSOGENIZATION PROTEIN HFLD"/>
    <property type="match status" value="1"/>
</dbReference>
<dbReference type="PANTHER" id="PTHR38100:SF1">
    <property type="entry name" value="HIGH FREQUENCY LYSOGENIZATION PROTEIN HFLD"/>
    <property type="match status" value="1"/>
</dbReference>
<dbReference type="Pfam" id="PF04356">
    <property type="entry name" value="DUF489"/>
    <property type="match status" value="1"/>
</dbReference>
<dbReference type="SUPFAM" id="SSF101322">
    <property type="entry name" value="YcfC-like"/>
    <property type="match status" value="1"/>
</dbReference>